<gene>
    <name evidence="1" type="primary">nfo</name>
    <name type="ordered locus">SEN2196</name>
</gene>
<reference key="1">
    <citation type="journal article" date="2008" name="Genome Res.">
        <title>Comparative genome analysis of Salmonella enteritidis PT4 and Salmonella gallinarum 287/91 provides insights into evolutionary and host adaptation pathways.</title>
        <authorList>
            <person name="Thomson N.R."/>
            <person name="Clayton D.J."/>
            <person name="Windhorst D."/>
            <person name="Vernikos G."/>
            <person name="Davidson S."/>
            <person name="Churcher C."/>
            <person name="Quail M.A."/>
            <person name="Stevens M."/>
            <person name="Jones M.A."/>
            <person name="Watson M."/>
            <person name="Barron A."/>
            <person name="Layton A."/>
            <person name="Pickard D."/>
            <person name="Kingsley R.A."/>
            <person name="Bignell A."/>
            <person name="Clark L."/>
            <person name="Harris B."/>
            <person name="Ormond D."/>
            <person name="Abdellah Z."/>
            <person name="Brooks K."/>
            <person name="Cherevach I."/>
            <person name="Chillingworth T."/>
            <person name="Woodward J."/>
            <person name="Norberczak H."/>
            <person name="Lord A."/>
            <person name="Arrowsmith C."/>
            <person name="Jagels K."/>
            <person name="Moule S."/>
            <person name="Mungall K."/>
            <person name="Saunders M."/>
            <person name="Whitehead S."/>
            <person name="Chabalgoity J.A."/>
            <person name="Maskell D."/>
            <person name="Humphreys T."/>
            <person name="Roberts M."/>
            <person name="Barrow P.A."/>
            <person name="Dougan G."/>
            <person name="Parkhill J."/>
        </authorList>
    </citation>
    <scope>NUCLEOTIDE SEQUENCE [LARGE SCALE GENOMIC DNA]</scope>
    <source>
        <strain>P125109</strain>
    </source>
</reference>
<feature type="chain" id="PRO_1000096900" description="Probable endonuclease 4">
    <location>
        <begin position="1"/>
        <end position="285"/>
    </location>
</feature>
<feature type="binding site" evidence="1">
    <location>
        <position position="69"/>
    </location>
    <ligand>
        <name>Zn(2+)</name>
        <dbReference type="ChEBI" id="CHEBI:29105"/>
        <label>1</label>
    </ligand>
</feature>
<feature type="binding site" evidence="1">
    <location>
        <position position="109"/>
    </location>
    <ligand>
        <name>Zn(2+)</name>
        <dbReference type="ChEBI" id="CHEBI:29105"/>
        <label>1</label>
    </ligand>
</feature>
<feature type="binding site" evidence="1">
    <location>
        <position position="145"/>
    </location>
    <ligand>
        <name>Zn(2+)</name>
        <dbReference type="ChEBI" id="CHEBI:29105"/>
        <label>1</label>
    </ligand>
</feature>
<feature type="binding site" evidence="1">
    <location>
        <position position="145"/>
    </location>
    <ligand>
        <name>Zn(2+)</name>
        <dbReference type="ChEBI" id="CHEBI:29105"/>
        <label>2</label>
    </ligand>
</feature>
<feature type="binding site" evidence="1">
    <location>
        <position position="179"/>
    </location>
    <ligand>
        <name>Zn(2+)</name>
        <dbReference type="ChEBI" id="CHEBI:29105"/>
        <label>2</label>
    </ligand>
</feature>
<feature type="binding site" evidence="1">
    <location>
        <position position="182"/>
    </location>
    <ligand>
        <name>Zn(2+)</name>
        <dbReference type="ChEBI" id="CHEBI:29105"/>
        <label>3</label>
    </ligand>
</feature>
<feature type="binding site" evidence="1">
    <location>
        <position position="216"/>
    </location>
    <ligand>
        <name>Zn(2+)</name>
        <dbReference type="ChEBI" id="CHEBI:29105"/>
        <label>2</label>
    </ligand>
</feature>
<feature type="binding site" evidence="1">
    <location>
        <position position="229"/>
    </location>
    <ligand>
        <name>Zn(2+)</name>
        <dbReference type="ChEBI" id="CHEBI:29105"/>
        <label>3</label>
    </ligand>
</feature>
<feature type="binding site" evidence="1">
    <location>
        <position position="231"/>
    </location>
    <ligand>
        <name>Zn(2+)</name>
        <dbReference type="ChEBI" id="CHEBI:29105"/>
        <label>3</label>
    </ligand>
</feature>
<feature type="binding site" evidence="1">
    <location>
        <position position="261"/>
    </location>
    <ligand>
        <name>Zn(2+)</name>
        <dbReference type="ChEBI" id="CHEBI:29105"/>
        <label>2</label>
    </ligand>
</feature>
<name>END4_SALEP</name>
<comment type="function">
    <text evidence="1">Endonuclease IV plays a role in DNA repair. It cleaves phosphodiester bonds at apurinic or apyrimidinic (AP) sites, generating a 3'-hydroxyl group and a 5'-terminal sugar phosphate.</text>
</comment>
<comment type="catalytic activity">
    <reaction evidence="1">
        <text>Endonucleolytic cleavage to 5'-phosphooligonucleotide end-products.</text>
        <dbReference type="EC" id="3.1.21.2"/>
    </reaction>
</comment>
<comment type="cofactor">
    <cofactor evidence="1">
        <name>Zn(2+)</name>
        <dbReference type="ChEBI" id="CHEBI:29105"/>
    </cofactor>
    <text evidence="1">Binds 3 Zn(2+) ions.</text>
</comment>
<comment type="similarity">
    <text evidence="1">Belongs to the AP endonuclease 2 family.</text>
</comment>
<proteinExistence type="inferred from homology"/>
<organism>
    <name type="scientific">Salmonella enteritidis PT4 (strain P125109)</name>
    <dbReference type="NCBI Taxonomy" id="550537"/>
    <lineage>
        <taxon>Bacteria</taxon>
        <taxon>Pseudomonadati</taxon>
        <taxon>Pseudomonadota</taxon>
        <taxon>Gammaproteobacteria</taxon>
        <taxon>Enterobacterales</taxon>
        <taxon>Enterobacteriaceae</taxon>
        <taxon>Salmonella</taxon>
    </lineage>
</organism>
<accession>B5R173</accession>
<protein>
    <recommendedName>
        <fullName evidence="1">Probable endonuclease 4</fullName>
        <ecNumber evidence="1">3.1.21.2</ecNumber>
    </recommendedName>
    <alternativeName>
        <fullName evidence="1">Endodeoxyribonuclease IV</fullName>
    </alternativeName>
    <alternativeName>
        <fullName evidence="1">Endonuclease IV</fullName>
    </alternativeName>
</protein>
<keyword id="KW-0227">DNA damage</keyword>
<keyword id="KW-0234">DNA repair</keyword>
<keyword id="KW-0255">Endonuclease</keyword>
<keyword id="KW-0378">Hydrolase</keyword>
<keyword id="KW-0479">Metal-binding</keyword>
<keyword id="KW-0540">Nuclease</keyword>
<keyword id="KW-0862">Zinc</keyword>
<dbReference type="EC" id="3.1.21.2" evidence="1"/>
<dbReference type="EMBL" id="AM933172">
    <property type="protein sequence ID" value="CAR33781.1"/>
    <property type="molecule type" value="Genomic_DNA"/>
</dbReference>
<dbReference type="RefSeq" id="WP_000873915.1">
    <property type="nucleotide sequence ID" value="NC_011294.1"/>
</dbReference>
<dbReference type="SMR" id="B5R173"/>
<dbReference type="KEGG" id="set:SEN2196"/>
<dbReference type="HOGENOM" id="CLU_025885_0_4_6"/>
<dbReference type="Proteomes" id="UP000000613">
    <property type="component" value="Chromosome"/>
</dbReference>
<dbReference type="GO" id="GO:0008833">
    <property type="term" value="F:deoxyribonuclease IV (phage-T4-induced) activity"/>
    <property type="evidence" value="ECO:0007669"/>
    <property type="project" value="UniProtKB-UniRule"/>
</dbReference>
<dbReference type="GO" id="GO:0003677">
    <property type="term" value="F:DNA binding"/>
    <property type="evidence" value="ECO:0007669"/>
    <property type="project" value="InterPro"/>
</dbReference>
<dbReference type="GO" id="GO:0003906">
    <property type="term" value="F:DNA-(apurinic or apyrimidinic site) endonuclease activity"/>
    <property type="evidence" value="ECO:0007669"/>
    <property type="project" value="TreeGrafter"/>
</dbReference>
<dbReference type="GO" id="GO:0008081">
    <property type="term" value="F:phosphoric diester hydrolase activity"/>
    <property type="evidence" value="ECO:0007669"/>
    <property type="project" value="TreeGrafter"/>
</dbReference>
<dbReference type="GO" id="GO:0008270">
    <property type="term" value="F:zinc ion binding"/>
    <property type="evidence" value="ECO:0007669"/>
    <property type="project" value="UniProtKB-UniRule"/>
</dbReference>
<dbReference type="GO" id="GO:0006284">
    <property type="term" value="P:base-excision repair"/>
    <property type="evidence" value="ECO:0007669"/>
    <property type="project" value="TreeGrafter"/>
</dbReference>
<dbReference type="CDD" id="cd00019">
    <property type="entry name" value="AP2Ec"/>
    <property type="match status" value="1"/>
</dbReference>
<dbReference type="FunFam" id="3.20.20.150:FF:000001">
    <property type="entry name" value="Probable endonuclease 4"/>
    <property type="match status" value="1"/>
</dbReference>
<dbReference type="Gene3D" id="3.20.20.150">
    <property type="entry name" value="Divalent-metal-dependent TIM barrel enzymes"/>
    <property type="match status" value="1"/>
</dbReference>
<dbReference type="HAMAP" id="MF_00152">
    <property type="entry name" value="Nfo"/>
    <property type="match status" value="1"/>
</dbReference>
<dbReference type="InterPro" id="IPR001719">
    <property type="entry name" value="AP_endonuc_2"/>
</dbReference>
<dbReference type="InterPro" id="IPR018246">
    <property type="entry name" value="AP_endonuc_F2_Zn_BS"/>
</dbReference>
<dbReference type="InterPro" id="IPR036237">
    <property type="entry name" value="Xyl_isomerase-like_sf"/>
</dbReference>
<dbReference type="InterPro" id="IPR013022">
    <property type="entry name" value="Xyl_isomerase-like_TIM-brl"/>
</dbReference>
<dbReference type="NCBIfam" id="TIGR00587">
    <property type="entry name" value="nfo"/>
    <property type="match status" value="1"/>
</dbReference>
<dbReference type="NCBIfam" id="NF002199">
    <property type="entry name" value="PRK01060.1-4"/>
    <property type="match status" value="1"/>
</dbReference>
<dbReference type="PANTHER" id="PTHR21445:SF0">
    <property type="entry name" value="APURINIC-APYRIMIDINIC ENDONUCLEASE"/>
    <property type="match status" value="1"/>
</dbReference>
<dbReference type="PANTHER" id="PTHR21445">
    <property type="entry name" value="ENDONUCLEASE IV ENDODEOXYRIBONUCLEASE IV"/>
    <property type="match status" value="1"/>
</dbReference>
<dbReference type="Pfam" id="PF01261">
    <property type="entry name" value="AP_endonuc_2"/>
    <property type="match status" value="1"/>
</dbReference>
<dbReference type="SMART" id="SM00518">
    <property type="entry name" value="AP2Ec"/>
    <property type="match status" value="1"/>
</dbReference>
<dbReference type="SUPFAM" id="SSF51658">
    <property type="entry name" value="Xylose isomerase-like"/>
    <property type="match status" value="1"/>
</dbReference>
<dbReference type="PROSITE" id="PS00729">
    <property type="entry name" value="AP_NUCLEASE_F2_1"/>
    <property type="match status" value="1"/>
</dbReference>
<dbReference type="PROSITE" id="PS00730">
    <property type="entry name" value="AP_NUCLEASE_F2_2"/>
    <property type="match status" value="1"/>
</dbReference>
<dbReference type="PROSITE" id="PS00731">
    <property type="entry name" value="AP_NUCLEASE_F2_3"/>
    <property type="match status" value="1"/>
</dbReference>
<dbReference type="PROSITE" id="PS51432">
    <property type="entry name" value="AP_NUCLEASE_F2_4"/>
    <property type="match status" value="1"/>
</dbReference>
<evidence type="ECO:0000255" key="1">
    <source>
        <dbReference type="HAMAP-Rule" id="MF_00152"/>
    </source>
</evidence>
<sequence length="285" mass="31212">MKYIGAHVSAAGGLANAPARAAEIGATAFALFTKNQRQWRAAPLTPQVIDDFKIACEKYHFSAAQILPHDSYLINLGHPVSEALEKSRDAFLDEMQRCEQLGLTLLNFHPGSHLMQIAQEDCLARIAESINIALAQTEGVTAVIENTAGQGSNLGFEFEQLAAIIDGVEDKSRVGVCIDTCHAFAAGYDLRTPEACEKTFSEFGKIVGFQYLRGMHLNDAKSAFGSRVDRHHSLGEGNIGHDAFRWIMQDGRFDGIPLILETINPDIWAEEIAWLKAQQIAEAMA</sequence>